<gene>
    <name type="primary">TUBB4B</name>
    <name type="synonym">TUBB2C</name>
</gene>
<dbReference type="EMBL" id="X02344">
    <property type="protein sequence ID" value="CAA26203.1"/>
    <property type="molecule type" value="Genomic_DNA"/>
</dbReference>
<dbReference type="EMBL" id="BX255925">
    <property type="status" value="NOT_ANNOTATED_CDS"/>
    <property type="molecule type" value="Genomic_DNA"/>
</dbReference>
<dbReference type="EMBL" id="BC001911">
    <property type="protein sequence ID" value="AAH01911.1"/>
    <property type="molecule type" value="mRNA"/>
</dbReference>
<dbReference type="EMBL" id="BC002783">
    <property type="protein sequence ID" value="AAH02783.1"/>
    <property type="molecule type" value="mRNA"/>
</dbReference>
<dbReference type="EMBL" id="BC002885">
    <property type="protein sequence ID" value="AAH02885.1"/>
    <property type="molecule type" value="mRNA"/>
</dbReference>
<dbReference type="EMBL" id="BC004188">
    <property type="protein sequence ID" value="AAH04188.1"/>
    <property type="molecule type" value="mRNA"/>
</dbReference>
<dbReference type="EMBL" id="BC007889">
    <property type="protein sequence ID" value="AAH07889.1"/>
    <property type="molecule type" value="mRNA"/>
</dbReference>
<dbReference type="EMBL" id="BC012835">
    <property type="protein sequence ID" value="AAH12835.1"/>
    <property type="molecule type" value="mRNA"/>
</dbReference>
<dbReference type="EMBL" id="BC019359">
    <property type="protein sequence ID" value="AAH19359.1"/>
    <property type="molecule type" value="mRNA"/>
</dbReference>
<dbReference type="EMBL" id="BC019829">
    <property type="protein sequence ID" value="AAH19829.1"/>
    <property type="molecule type" value="mRNA"/>
</dbReference>
<dbReference type="EMBL" id="BC039175">
    <property type="protein sequence ID" value="AAH39175.1"/>
    <property type="molecule type" value="mRNA"/>
</dbReference>
<dbReference type="EMBL" id="BC071889">
    <property type="protein sequence ID" value="AAH71889.1"/>
    <property type="molecule type" value="mRNA"/>
</dbReference>
<dbReference type="CCDS" id="CCDS7039.1"/>
<dbReference type="PIR" id="I38370">
    <property type="entry name" value="I38370"/>
</dbReference>
<dbReference type="RefSeq" id="NP_006079.1">
    <property type="nucleotide sequence ID" value="NM_006088.6"/>
</dbReference>
<dbReference type="PDB" id="7UN1">
    <property type="method" value="EM"/>
    <property type="resolution" value="6.00 A"/>
    <property type="chains" value="AB/AD/AF/BA/BD/BF/CB/CD/CF/DB/DD/DF/EB/ED/EF/FD/FF/FH/GD/GF/GH/HD/HF/HH/ID/IF/IH/JD/JF/KD=1-445"/>
</dbReference>
<dbReference type="PDB" id="7UNG">
    <property type="method" value="EM"/>
    <property type="resolution" value="3.60 A"/>
    <property type="chains" value="AB/AD/AF/AH/AJ/AL/BB/BD/BF/BH/BJ/BL/CB/CD/CF/CH/CJ/CL/DB/DD/DF/DH/DJ/DL/EB/ED/EF/EH/EJ/EL=1-445"/>
</dbReference>
<dbReference type="PDB" id="8J07">
    <property type="method" value="EM"/>
    <property type="resolution" value="4.10 A"/>
    <property type="chains" value="AB/AD/AF/AH/AJ/AL/AN/AP/AR/AT/AV/AX/BB/BD/BF/BH/BJ/BL/BN/BP/BR/BT/BV/BX/CB/CD/CF/CH/CJ/CL=1-445"/>
</dbReference>
<dbReference type="PDB" id="8SH7">
    <property type="method" value="EM"/>
    <property type="resolution" value="2.80 A"/>
    <property type="chains" value="B=1-445"/>
</dbReference>
<dbReference type="PDBsum" id="7UN1"/>
<dbReference type="PDBsum" id="7UNG"/>
<dbReference type="PDBsum" id="8J07"/>
<dbReference type="PDBsum" id="8SH7"/>
<dbReference type="EMDB" id="EMD-26611"/>
<dbReference type="EMDB" id="EMD-26624"/>
<dbReference type="EMDB" id="EMD-35888"/>
<dbReference type="EMDB" id="EMD-40480"/>
<dbReference type="SMR" id="P68371"/>
<dbReference type="BioGRID" id="115656">
    <property type="interactions" value="724"/>
</dbReference>
<dbReference type="CORUM" id="P68371"/>
<dbReference type="FunCoup" id="P68371">
    <property type="interactions" value="1766"/>
</dbReference>
<dbReference type="IntAct" id="P68371">
    <property type="interactions" value="313"/>
</dbReference>
<dbReference type="MINT" id="P68371"/>
<dbReference type="STRING" id="9606.ENSP00000341289"/>
<dbReference type="BindingDB" id="P68371"/>
<dbReference type="ChEMBL" id="CHEMBL1848"/>
<dbReference type="DrugBank" id="DB00518">
    <property type="generic name" value="Albendazole"/>
</dbReference>
<dbReference type="DrugBank" id="DB05147">
    <property type="generic name" value="CYT997"/>
</dbReference>
<dbReference type="DrugBank" id="DB01873">
    <property type="generic name" value="Epothilone D"/>
</dbReference>
<dbReference type="DrugBank" id="DB00643">
    <property type="generic name" value="Mebendazole"/>
</dbReference>
<dbReference type="DrugBank" id="DB04910">
    <property type="generic name" value="Oxibendazole"/>
</dbReference>
<dbReference type="DrugBank" id="DB03010">
    <property type="generic name" value="Patupilone"/>
</dbReference>
<dbReference type="DrugBank" id="DB12695">
    <property type="generic name" value="Phenethyl Isothiocyanate"/>
</dbReference>
<dbReference type="DrugCentral" id="P68371"/>
<dbReference type="GlyCosmos" id="P68371">
    <property type="glycosylation" value="6 sites, 1 glycan"/>
</dbReference>
<dbReference type="GlyGen" id="P68371">
    <property type="glycosylation" value="7 sites, 1 N-linked glycan (1 site), 1 O-linked glycan (6 sites)"/>
</dbReference>
<dbReference type="iPTMnet" id="P68371"/>
<dbReference type="MetOSite" id="P68371"/>
<dbReference type="PhosphoSitePlus" id="P68371"/>
<dbReference type="SwissPalm" id="P68371"/>
<dbReference type="BioMuta" id="TUBB4B"/>
<dbReference type="DMDM" id="55977480"/>
<dbReference type="OGP" id="P05217"/>
<dbReference type="REPRODUCTION-2DPAGE" id="IPI00007752"/>
<dbReference type="jPOST" id="P68371"/>
<dbReference type="MassIVE" id="P68371"/>
<dbReference type="PaxDb" id="9606-ENSP00000341289"/>
<dbReference type="PeptideAtlas" id="P68371"/>
<dbReference type="PRIDE" id="P68371"/>
<dbReference type="ProteomicsDB" id="57535"/>
<dbReference type="Pumba" id="P68371"/>
<dbReference type="TopDownProteomics" id="P68371"/>
<dbReference type="Antibodypedia" id="4391">
    <property type="antibodies" value="148 antibodies from 25 providers"/>
</dbReference>
<dbReference type="DNASU" id="10383"/>
<dbReference type="Ensembl" id="ENST00000340384.5">
    <property type="protein sequence ID" value="ENSP00000341289.4"/>
    <property type="gene ID" value="ENSG00000188229.6"/>
</dbReference>
<dbReference type="GeneID" id="10383"/>
<dbReference type="KEGG" id="hsa:10383"/>
<dbReference type="MANE-Select" id="ENST00000340384.5">
    <property type="protein sequence ID" value="ENSP00000341289.4"/>
    <property type="RefSeq nucleotide sequence ID" value="NM_006088.6"/>
    <property type="RefSeq protein sequence ID" value="NP_006079.1"/>
</dbReference>
<dbReference type="UCSC" id="uc004cmh.2">
    <property type="organism name" value="human"/>
</dbReference>
<dbReference type="AGR" id="HGNC:20771"/>
<dbReference type="CTD" id="10383"/>
<dbReference type="DisGeNET" id="10383"/>
<dbReference type="GeneCards" id="TUBB4B"/>
<dbReference type="HGNC" id="HGNC:20771">
    <property type="gene designation" value="TUBB4B"/>
</dbReference>
<dbReference type="HPA" id="ENSG00000188229">
    <property type="expression patterns" value="Low tissue specificity"/>
</dbReference>
<dbReference type="MalaCards" id="TUBB4B"/>
<dbReference type="MIM" id="602660">
    <property type="type" value="gene"/>
</dbReference>
<dbReference type="MIM" id="617879">
    <property type="type" value="phenotype"/>
</dbReference>
<dbReference type="neXtProt" id="NX_P68371"/>
<dbReference type="OpenTargets" id="ENSG00000188229"/>
<dbReference type="Orphanet" id="65">
    <property type="disease" value="Leber congenital amaurosis"/>
</dbReference>
<dbReference type="PharmGKB" id="PA142670672"/>
<dbReference type="VEuPathDB" id="HostDB:ENSG00000188229"/>
<dbReference type="eggNOG" id="KOG1375">
    <property type="taxonomic scope" value="Eukaryota"/>
</dbReference>
<dbReference type="GeneTree" id="ENSGT00940000154394"/>
<dbReference type="HOGENOM" id="CLU_015718_1_1_1"/>
<dbReference type="InParanoid" id="P68371"/>
<dbReference type="OMA" id="WVPRSVN"/>
<dbReference type="OrthoDB" id="1662883at2759"/>
<dbReference type="PAN-GO" id="P68371">
    <property type="GO annotations" value="6 GO annotations based on evolutionary models"/>
</dbReference>
<dbReference type="PhylomeDB" id="P68371"/>
<dbReference type="TreeFam" id="TF300298"/>
<dbReference type="PathwayCommons" id="P68371"/>
<dbReference type="Reactome" id="R-HSA-1445148">
    <property type="pathway name" value="Translocation of SLC2A4 (GLUT4) to the plasma membrane"/>
</dbReference>
<dbReference type="Reactome" id="R-HSA-190840">
    <property type="pathway name" value="Microtubule-dependent trafficking of connexons from Golgi to the plasma membrane"/>
</dbReference>
<dbReference type="Reactome" id="R-HSA-190861">
    <property type="pathway name" value="Gap junction assembly"/>
</dbReference>
<dbReference type="Reactome" id="R-HSA-2132295">
    <property type="pathway name" value="MHC class II antigen presentation"/>
</dbReference>
<dbReference type="Reactome" id="R-HSA-2467813">
    <property type="pathway name" value="Separation of Sister Chromatids"/>
</dbReference>
<dbReference type="Reactome" id="R-HSA-2500257">
    <property type="pathway name" value="Resolution of Sister Chromatid Cohesion"/>
</dbReference>
<dbReference type="Reactome" id="R-HSA-2565942">
    <property type="pathway name" value="Regulation of PLK1 Activity at G2/M Transition"/>
</dbReference>
<dbReference type="Reactome" id="R-HSA-3371497">
    <property type="pathway name" value="HSP90 chaperone cycle for steroid hormone receptors (SHR) in the presence of ligand"/>
</dbReference>
<dbReference type="Reactome" id="R-HSA-380259">
    <property type="pathway name" value="Loss of Nlp from mitotic centrosomes"/>
</dbReference>
<dbReference type="Reactome" id="R-HSA-380270">
    <property type="pathway name" value="Recruitment of mitotic centrosome proteins and complexes"/>
</dbReference>
<dbReference type="Reactome" id="R-HSA-380284">
    <property type="pathway name" value="Loss of proteins required for interphase microtubule organization from the centrosome"/>
</dbReference>
<dbReference type="Reactome" id="R-HSA-380320">
    <property type="pathway name" value="Recruitment of NuMA to mitotic centrosomes"/>
</dbReference>
<dbReference type="Reactome" id="R-HSA-389957">
    <property type="pathway name" value="Prefoldin mediated transfer of substrate to CCT/TriC"/>
</dbReference>
<dbReference type="Reactome" id="R-HSA-389960">
    <property type="pathway name" value="Formation of tubulin folding intermediates by CCT/TriC"/>
</dbReference>
<dbReference type="Reactome" id="R-HSA-389977">
    <property type="pathway name" value="Post-chaperonin tubulin folding pathway"/>
</dbReference>
<dbReference type="Reactome" id="R-HSA-437239">
    <property type="pathway name" value="Recycling pathway of L1"/>
</dbReference>
<dbReference type="Reactome" id="R-HSA-5610787">
    <property type="pathway name" value="Hedgehog 'off' state"/>
</dbReference>
<dbReference type="Reactome" id="R-HSA-5617833">
    <property type="pathway name" value="Cilium Assembly"/>
</dbReference>
<dbReference type="Reactome" id="R-HSA-5620912">
    <property type="pathway name" value="Anchoring of the basal body to the plasma membrane"/>
</dbReference>
<dbReference type="Reactome" id="R-HSA-5620924">
    <property type="pathway name" value="Intraflagellar transport"/>
</dbReference>
<dbReference type="Reactome" id="R-HSA-5626467">
    <property type="pathway name" value="RHO GTPases activate IQGAPs"/>
</dbReference>
<dbReference type="Reactome" id="R-HSA-5663220">
    <property type="pathway name" value="RHO GTPases Activate Formins"/>
</dbReference>
<dbReference type="Reactome" id="R-HSA-6798695">
    <property type="pathway name" value="Neutrophil degranulation"/>
</dbReference>
<dbReference type="Reactome" id="R-HSA-6807878">
    <property type="pathway name" value="COPI-mediated anterograde transport"/>
</dbReference>
<dbReference type="Reactome" id="R-HSA-6811434">
    <property type="pathway name" value="COPI-dependent Golgi-to-ER retrograde traffic"/>
</dbReference>
<dbReference type="Reactome" id="R-HSA-6811436">
    <property type="pathway name" value="COPI-independent Golgi-to-ER retrograde traffic"/>
</dbReference>
<dbReference type="Reactome" id="R-HSA-68877">
    <property type="pathway name" value="Mitotic Prometaphase"/>
</dbReference>
<dbReference type="Reactome" id="R-HSA-8852276">
    <property type="pathway name" value="The role of GTSE1 in G2/M progression after G2 checkpoint"/>
</dbReference>
<dbReference type="Reactome" id="R-HSA-8854518">
    <property type="pathway name" value="AURKA Activation by TPX2"/>
</dbReference>
<dbReference type="Reactome" id="R-HSA-8955332">
    <property type="pathway name" value="Carboxyterminal post-translational modifications of tubulin"/>
</dbReference>
<dbReference type="Reactome" id="R-HSA-9609690">
    <property type="pathway name" value="HCMV Early Events"/>
</dbReference>
<dbReference type="Reactome" id="R-HSA-9609736">
    <property type="pathway name" value="Assembly and cell surface presentation of NMDA receptors"/>
</dbReference>
<dbReference type="Reactome" id="R-HSA-9619483">
    <property type="pathway name" value="Activation of AMPK downstream of NMDARs"/>
</dbReference>
<dbReference type="Reactome" id="R-HSA-9646399">
    <property type="pathway name" value="Aggrephagy"/>
</dbReference>
<dbReference type="Reactome" id="R-HSA-9648025">
    <property type="pathway name" value="EML4 and NUDC in mitotic spindle formation"/>
</dbReference>
<dbReference type="Reactome" id="R-HSA-9668328">
    <property type="pathway name" value="Sealing of the nuclear envelope (NE) by ESCRT-III"/>
</dbReference>
<dbReference type="Reactome" id="R-HSA-983189">
    <property type="pathway name" value="Kinesins"/>
</dbReference>
<dbReference type="Reactome" id="R-HSA-9833482">
    <property type="pathway name" value="PKR-mediated signaling"/>
</dbReference>
<dbReference type="SignaLink" id="P68371"/>
<dbReference type="SIGNOR" id="P68371"/>
<dbReference type="BioGRID-ORCS" id="10383">
    <property type="hits" value="219 hits in 1168 CRISPR screens"/>
</dbReference>
<dbReference type="CD-CODE" id="91857CE7">
    <property type="entry name" value="Nucleolus"/>
</dbReference>
<dbReference type="CD-CODE" id="FB4E32DD">
    <property type="entry name" value="Presynaptic clusters and postsynaptic densities"/>
</dbReference>
<dbReference type="ChiTaRS" id="TUBB4B">
    <property type="organism name" value="human"/>
</dbReference>
<dbReference type="GeneWiki" id="TUBB2C"/>
<dbReference type="GenomeRNAi" id="10383"/>
<dbReference type="Pharos" id="P68371">
    <property type="development level" value="Tclin"/>
</dbReference>
<dbReference type="PRO" id="PR:P68371"/>
<dbReference type="Proteomes" id="UP000005640">
    <property type="component" value="Chromosome 9"/>
</dbReference>
<dbReference type="RNAct" id="P68371">
    <property type="molecule type" value="protein"/>
</dbReference>
<dbReference type="Bgee" id="ENSG00000188229">
    <property type="expression patterns" value="Expressed in right testis and 208 other cell types or tissues"/>
</dbReference>
<dbReference type="GO" id="GO:0005879">
    <property type="term" value="C:axonemal microtubule"/>
    <property type="evidence" value="ECO:0000314"/>
    <property type="project" value="UniProtKB"/>
</dbReference>
<dbReference type="GO" id="GO:0035578">
    <property type="term" value="C:azurophil granule lumen"/>
    <property type="evidence" value="ECO:0000304"/>
    <property type="project" value="Reactome"/>
</dbReference>
<dbReference type="GO" id="GO:0005737">
    <property type="term" value="C:cytoplasm"/>
    <property type="evidence" value="ECO:0000318"/>
    <property type="project" value="GO_Central"/>
</dbReference>
<dbReference type="GO" id="GO:0005856">
    <property type="term" value="C:cytoskeleton"/>
    <property type="evidence" value="ECO:0000304"/>
    <property type="project" value="ProtInc"/>
</dbReference>
<dbReference type="GO" id="GO:0005829">
    <property type="term" value="C:cytosol"/>
    <property type="evidence" value="ECO:0000304"/>
    <property type="project" value="Reactome"/>
</dbReference>
<dbReference type="GO" id="GO:0070062">
    <property type="term" value="C:extracellular exosome"/>
    <property type="evidence" value="ECO:0007005"/>
    <property type="project" value="UniProtKB"/>
</dbReference>
<dbReference type="GO" id="GO:0005576">
    <property type="term" value="C:extracellular region"/>
    <property type="evidence" value="ECO:0000304"/>
    <property type="project" value="Reactome"/>
</dbReference>
<dbReference type="GO" id="GO:1903561">
    <property type="term" value="C:extracellular vesicle"/>
    <property type="evidence" value="ECO:0007005"/>
    <property type="project" value="UniProtKB"/>
</dbReference>
<dbReference type="GO" id="GO:0045171">
    <property type="term" value="C:intercellular bridge"/>
    <property type="evidence" value="ECO:0000314"/>
    <property type="project" value="HPA"/>
</dbReference>
<dbReference type="GO" id="GO:0005874">
    <property type="term" value="C:microtubule"/>
    <property type="evidence" value="ECO:0000314"/>
    <property type="project" value="UniProtKB"/>
</dbReference>
<dbReference type="GO" id="GO:0015630">
    <property type="term" value="C:microtubule cytoskeleton"/>
    <property type="evidence" value="ECO:0000314"/>
    <property type="project" value="HPA"/>
</dbReference>
<dbReference type="GO" id="GO:0072686">
    <property type="term" value="C:mitotic spindle"/>
    <property type="evidence" value="ECO:0000314"/>
    <property type="project" value="HPA"/>
</dbReference>
<dbReference type="GO" id="GO:0005634">
    <property type="term" value="C:nucleus"/>
    <property type="evidence" value="ECO:0007005"/>
    <property type="project" value="UniProtKB"/>
</dbReference>
<dbReference type="GO" id="GO:0036126">
    <property type="term" value="C:sperm flagellum"/>
    <property type="evidence" value="ECO:0007669"/>
    <property type="project" value="Ensembl"/>
</dbReference>
<dbReference type="GO" id="GO:0003725">
    <property type="term" value="F:double-stranded RNA binding"/>
    <property type="evidence" value="ECO:0000314"/>
    <property type="project" value="MGI"/>
</dbReference>
<dbReference type="GO" id="GO:0005525">
    <property type="term" value="F:GTP binding"/>
    <property type="evidence" value="ECO:0000318"/>
    <property type="project" value="GO_Central"/>
</dbReference>
<dbReference type="GO" id="GO:0003924">
    <property type="term" value="F:GTPase activity"/>
    <property type="evidence" value="ECO:0007669"/>
    <property type="project" value="InterPro"/>
</dbReference>
<dbReference type="GO" id="GO:0046872">
    <property type="term" value="F:metal ion binding"/>
    <property type="evidence" value="ECO:0007669"/>
    <property type="project" value="UniProtKB-KW"/>
</dbReference>
<dbReference type="GO" id="GO:0042288">
    <property type="term" value="F:MHC class I protein binding"/>
    <property type="evidence" value="ECO:0000304"/>
    <property type="project" value="UniProtKB"/>
</dbReference>
<dbReference type="GO" id="GO:0005200">
    <property type="term" value="F:structural constituent of cytoskeleton"/>
    <property type="evidence" value="ECO:0000318"/>
    <property type="project" value="GO_Central"/>
</dbReference>
<dbReference type="GO" id="GO:0051082">
    <property type="term" value="F:unfolded protein binding"/>
    <property type="evidence" value="ECO:0000303"/>
    <property type="project" value="UniProtKB"/>
</dbReference>
<dbReference type="GO" id="GO:0030317">
    <property type="term" value="P:flagellated sperm motility"/>
    <property type="evidence" value="ECO:0007669"/>
    <property type="project" value="Ensembl"/>
</dbReference>
<dbReference type="GO" id="GO:0000226">
    <property type="term" value="P:microtubule cytoskeleton organization"/>
    <property type="evidence" value="ECO:0000318"/>
    <property type="project" value="GO_Central"/>
</dbReference>
<dbReference type="GO" id="GO:0000278">
    <property type="term" value="P:mitotic cell cycle"/>
    <property type="evidence" value="ECO:0000318"/>
    <property type="project" value="GO_Central"/>
</dbReference>
<dbReference type="GO" id="GO:0042267">
    <property type="term" value="P:natural killer cell mediated cytotoxicity"/>
    <property type="evidence" value="ECO:0000303"/>
    <property type="project" value="UniProtKB"/>
</dbReference>
<dbReference type="CDD" id="cd02187">
    <property type="entry name" value="beta_tubulin"/>
    <property type="match status" value="1"/>
</dbReference>
<dbReference type="FunFam" id="1.10.287.600:FF:000006">
    <property type="entry name" value="Tubulin beta chain"/>
    <property type="match status" value="1"/>
</dbReference>
<dbReference type="FunFam" id="3.30.1330.20:FF:000002">
    <property type="entry name" value="Tubulin beta chain"/>
    <property type="match status" value="1"/>
</dbReference>
<dbReference type="FunFam" id="3.40.50.1440:FF:000003">
    <property type="entry name" value="Tubulin beta chain"/>
    <property type="match status" value="1"/>
</dbReference>
<dbReference type="Gene3D" id="1.10.287.600">
    <property type="entry name" value="Helix hairpin bin"/>
    <property type="match status" value="1"/>
</dbReference>
<dbReference type="Gene3D" id="3.30.1330.20">
    <property type="entry name" value="Tubulin/FtsZ, C-terminal domain"/>
    <property type="match status" value="1"/>
</dbReference>
<dbReference type="Gene3D" id="3.40.50.1440">
    <property type="entry name" value="Tubulin/FtsZ, GTPase domain"/>
    <property type="match status" value="1"/>
</dbReference>
<dbReference type="InterPro" id="IPR013838">
    <property type="entry name" value="Beta-tubulin_BS"/>
</dbReference>
<dbReference type="InterPro" id="IPR002453">
    <property type="entry name" value="Beta_tubulin"/>
</dbReference>
<dbReference type="InterPro" id="IPR008280">
    <property type="entry name" value="Tub_FtsZ_C"/>
</dbReference>
<dbReference type="InterPro" id="IPR000217">
    <property type="entry name" value="Tubulin"/>
</dbReference>
<dbReference type="InterPro" id="IPR037103">
    <property type="entry name" value="Tubulin/FtsZ-like_C"/>
</dbReference>
<dbReference type="InterPro" id="IPR018316">
    <property type="entry name" value="Tubulin/FtsZ_2-layer-sand-dom"/>
</dbReference>
<dbReference type="InterPro" id="IPR036525">
    <property type="entry name" value="Tubulin/FtsZ_GTPase_sf"/>
</dbReference>
<dbReference type="InterPro" id="IPR023123">
    <property type="entry name" value="Tubulin_C"/>
</dbReference>
<dbReference type="InterPro" id="IPR017975">
    <property type="entry name" value="Tubulin_CS"/>
</dbReference>
<dbReference type="InterPro" id="IPR003008">
    <property type="entry name" value="Tubulin_FtsZ_GTPase"/>
</dbReference>
<dbReference type="PANTHER" id="PTHR11588">
    <property type="entry name" value="TUBULIN"/>
    <property type="match status" value="1"/>
</dbReference>
<dbReference type="Pfam" id="PF00091">
    <property type="entry name" value="Tubulin"/>
    <property type="match status" value="1"/>
</dbReference>
<dbReference type="Pfam" id="PF03953">
    <property type="entry name" value="Tubulin_C"/>
    <property type="match status" value="1"/>
</dbReference>
<dbReference type="PRINTS" id="PR01163">
    <property type="entry name" value="BETATUBULIN"/>
</dbReference>
<dbReference type="PRINTS" id="PR01161">
    <property type="entry name" value="TUBULIN"/>
</dbReference>
<dbReference type="SMART" id="SM00864">
    <property type="entry name" value="Tubulin"/>
    <property type="match status" value="1"/>
</dbReference>
<dbReference type="SMART" id="SM00865">
    <property type="entry name" value="Tubulin_C"/>
    <property type="match status" value="1"/>
</dbReference>
<dbReference type="SUPFAM" id="SSF55307">
    <property type="entry name" value="Tubulin C-terminal domain-like"/>
    <property type="match status" value="1"/>
</dbReference>
<dbReference type="SUPFAM" id="SSF52490">
    <property type="entry name" value="Tubulin nucleotide-binding domain-like"/>
    <property type="match status" value="1"/>
</dbReference>
<dbReference type="PROSITE" id="PS00227">
    <property type="entry name" value="TUBULIN"/>
    <property type="match status" value="1"/>
</dbReference>
<dbReference type="PROSITE" id="PS00228">
    <property type="entry name" value="TUBULIN_B_AUTOREG"/>
    <property type="match status" value="1"/>
</dbReference>
<comment type="function">
    <text>Tubulin is the major constituent of microtubules, a cylinder consisting of laterally associated linear protofilaments composed of alpha- and beta-tubulin heterodimers. Microtubules grow by the addition of GTP-tubulin dimers to the microtubule end, where a stabilizing cap forms. Below the cap, tubulin dimers are in GDP-bound state, owing to GTPase activity of alpha-tubulin.</text>
</comment>
<comment type="cofactor">
    <cofactor evidence="2">
        <name>Mg(2+)</name>
        <dbReference type="ChEBI" id="CHEBI:18420"/>
    </cofactor>
</comment>
<comment type="subunit">
    <text evidence="3">Dimer of alpha and beta chains. A typical microtubule is a hollow water-filled tube with an outer diameter of 25 nm and an inner diameter of 15 nM. Alpha-beta heterodimers associate head-to-tail to form protofilaments running lengthwise along the microtubule wall with the beta-tubulin subunit facing the microtubule plus end conferring a structural polarity. Microtubules usually have 13 protofilaments but different protofilament numbers can be found in some organisms and specialized cells. Component of sperm flagellar doublet microtubules.</text>
</comment>
<comment type="interaction">
    <interactant intactId="EBI-351356">
        <id>P68371</id>
    </interactant>
    <interactant intactId="EBI-5323863">
        <id>Q5S007</id>
        <label>LRRK2</label>
    </interactant>
    <organismsDiffer>false</organismsDiffer>
    <experiments>3</experiments>
</comment>
<comment type="subcellular location">
    <subcellularLocation>
        <location evidence="3">Cytoplasm</location>
        <location evidence="3">Cytoskeleton</location>
    </subcellularLocation>
    <subcellularLocation>
        <location evidence="3">Cytoplasm</location>
        <location evidence="3">Cytoskeleton</location>
        <location evidence="3">Flagellum axoneme</location>
    </subcellularLocation>
</comment>
<comment type="tissue specificity">
    <text evidence="9">Ubiquitous.</text>
</comment>
<comment type="domain">
    <text>The highly acidic C-terminal region may bind cations such as calcium.</text>
</comment>
<comment type="domain">
    <text evidence="1">The MREI motif is common among all beta-tubulin isoforms and may be critical for tubulin autoregulation.</text>
</comment>
<comment type="PTM">
    <text evidence="4 10">Some glutamate residues at the C-terminus are polyglutamylated, resulting in polyglutamate chains on the gamma-carboxyl group (PubMed:26875866). Polyglutamylation plays a key role in microtubule severing by spastin (SPAST). SPAST preferentially recognizes and acts on microtubules decorated with short polyglutamate tails: severing activity by SPAST increases as the number of glutamates per tubulin rises from one to eight, but decreases beyond this glutamylation threshold (PubMed:26875866). Glutamylation is also involved in cilia motility (By similarity).</text>
</comment>
<comment type="PTM">
    <text evidence="1 13">Some glutamate residues at the C-terminus are monoglycylated but not polyglycylated due to the absence of functional TTLL10 in human. Monoglycylation is mainly limited to tubulin incorporated into cilia and flagella axonemes, which is required for their stability and maintenance. Flagella glycylation controls sperm motility. Both polyglutamylation and monoglycylation can coexist on the same protein on adjacent residues, and lowering glycylation levels increases polyglutamylation, and reciprocally.</text>
</comment>
<comment type="PTM">
    <text evidence="8">Phosphorylated on Ser-172 by CDK1 during the cell cycle, from metaphase to telophase, but not in interphase. This phosphorylation inhibits tubulin incorporation into microtubules.</text>
</comment>
<comment type="disease" evidence="11">
    <disease id="DI-05197">
        <name>Leber congenital amaurosis with early-onset deafness</name>
        <acronym>LCAEOD</acronym>
        <description>An autosomal dominant disease characterized by severe retinal degeneration and sensorineural hearing loss. Symptoms occur within the first decade of life. Onset at birth is observed in some patients.</description>
        <dbReference type="MIM" id="617879"/>
    </disease>
    <text>The disease is caused by variants affecting the gene represented in this entry.</text>
</comment>
<comment type="similarity">
    <text evidence="12">Belongs to the tubulin family.</text>
</comment>
<evidence type="ECO:0000250" key="1">
    <source>
        <dbReference type="UniProtKB" id="P07437"/>
    </source>
</evidence>
<evidence type="ECO:0000250" key="2">
    <source>
        <dbReference type="UniProtKB" id="P68363"/>
    </source>
</evidence>
<evidence type="ECO:0000250" key="3">
    <source>
        <dbReference type="UniProtKB" id="P68372"/>
    </source>
</evidence>
<evidence type="ECO:0000250" key="4">
    <source>
        <dbReference type="UniProtKB" id="P99024"/>
    </source>
</evidence>
<evidence type="ECO:0000250" key="5">
    <source>
        <dbReference type="UniProtKB" id="Q13509"/>
    </source>
</evidence>
<evidence type="ECO:0000250" key="6">
    <source>
        <dbReference type="UniProtKB" id="Q2T9S0"/>
    </source>
</evidence>
<evidence type="ECO:0000256" key="7">
    <source>
        <dbReference type="SAM" id="MobiDB-lite"/>
    </source>
</evidence>
<evidence type="ECO:0000269" key="8">
    <source>
    </source>
</evidence>
<evidence type="ECO:0000269" key="9">
    <source>
    </source>
</evidence>
<evidence type="ECO:0000269" key="10">
    <source>
    </source>
</evidence>
<evidence type="ECO:0000269" key="11">
    <source>
    </source>
</evidence>
<evidence type="ECO:0000305" key="12"/>
<evidence type="ECO:0000305" key="13">
    <source>
    </source>
</evidence>
<evidence type="ECO:0007744" key="14">
    <source>
        <dbReference type="PDB" id="7UNG"/>
    </source>
</evidence>
<evidence type="ECO:0007744" key="15">
    <source>
    </source>
</evidence>
<evidence type="ECO:0007744" key="16">
    <source>
    </source>
</evidence>
<evidence type="ECO:0007829" key="17">
    <source>
        <dbReference type="PDB" id="8SH7"/>
    </source>
</evidence>
<accession>P68371</accession>
<accession>A2BFA2</accession>
<accession>P05217</accession>
<name>TBB4B_HUMAN</name>
<feature type="chain" id="PRO_0000048248" description="Tubulin beta-4B chain">
    <location>
        <begin position="1"/>
        <end position="445"/>
    </location>
</feature>
<feature type="region of interest" description="Disordered" evidence="7">
    <location>
        <begin position="426"/>
        <end position="445"/>
    </location>
</feature>
<feature type="short sequence motif" description="MREI motif" evidence="1">
    <location>
        <begin position="1"/>
        <end position="4"/>
    </location>
</feature>
<feature type="compositionally biased region" description="Acidic residues" evidence="7">
    <location>
        <begin position="429"/>
        <end position="445"/>
    </location>
</feature>
<feature type="binding site" evidence="5">
    <location>
        <position position="11"/>
    </location>
    <ligand>
        <name>GTP</name>
        <dbReference type="ChEBI" id="CHEBI:37565"/>
    </ligand>
</feature>
<feature type="binding site" evidence="2">
    <location>
        <position position="69"/>
    </location>
    <ligand>
        <name>GTP</name>
        <dbReference type="ChEBI" id="CHEBI:37565"/>
    </ligand>
</feature>
<feature type="binding site" evidence="2">
    <location>
        <position position="69"/>
    </location>
    <ligand>
        <name>Mg(2+)</name>
        <dbReference type="ChEBI" id="CHEBI:18420"/>
    </ligand>
</feature>
<feature type="binding site" evidence="5">
    <location>
        <position position="138"/>
    </location>
    <ligand>
        <name>GTP</name>
        <dbReference type="ChEBI" id="CHEBI:37565"/>
    </ligand>
</feature>
<feature type="binding site" evidence="5">
    <location>
        <position position="142"/>
    </location>
    <ligand>
        <name>GTP</name>
        <dbReference type="ChEBI" id="CHEBI:37565"/>
    </ligand>
</feature>
<feature type="binding site" evidence="5">
    <location>
        <position position="143"/>
    </location>
    <ligand>
        <name>GTP</name>
        <dbReference type="ChEBI" id="CHEBI:37565"/>
    </ligand>
</feature>
<feature type="binding site" evidence="5">
    <location>
        <position position="144"/>
    </location>
    <ligand>
        <name>GTP</name>
        <dbReference type="ChEBI" id="CHEBI:37565"/>
    </ligand>
</feature>
<feature type="binding site" evidence="5">
    <location>
        <position position="204"/>
    </location>
    <ligand>
        <name>GTP</name>
        <dbReference type="ChEBI" id="CHEBI:37565"/>
    </ligand>
</feature>
<feature type="binding site" evidence="5">
    <location>
        <position position="226"/>
    </location>
    <ligand>
        <name>GTP</name>
        <dbReference type="ChEBI" id="CHEBI:37565"/>
    </ligand>
</feature>
<feature type="modified residue" description="Phosphothreonine" evidence="16">
    <location>
        <position position="55"/>
    </location>
</feature>
<feature type="modified residue" description="N6-acetyllysine" evidence="15">
    <location>
        <position position="58"/>
    </location>
</feature>
<feature type="modified residue" description="Phosphoserine; by CDK1" evidence="8">
    <location>
        <position position="172"/>
    </location>
</feature>
<feature type="modified residue" description="5-glutamyl polyglutamate" evidence="6">
    <location>
        <position position="438"/>
    </location>
</feature>
<feature type="sequence variant" id="VAR_080782" description="In LCAEOD; affects microtubules polymerization; dbSNP:rs1554786802." evidence="11">
    <original>R</original>
    <variation>C</variation>
    <location>
        <position position="391"/>
    </location>
</feature>
<feature type="sequence variant" id="VAR_080783" description="In LCAEOD; affects microtubules polymerization; dbSNP:rs1554786803." evidence="11">
    <original>R</original>
    <variation>H</variation>
    <location>
        <position position="391"/>
    </location>
</feature>
<feature type="strand" evidence="17">
    <location>
        <begin position="3"/>
        <end position="9"/>
    </location>
</feature>
<feature type="helix" evidence="17">
    <location>
        <begin position="10"/>
        <end position="28"/>
    </location>
</feature>
<feature type="strand" evidence="17">
    <location>
        <begin position="34"/>
        <end position="36"/>
    </location>
</feature>
<feature type="helix" evidence="17">
    <location>
        <begin position="41"/>
        <end position="43"/>
    </location>
</feature>
<feature type="helix" evidence="17">
    <location>
        <begin position="47"/>
        <end position="49"/>
    </location>
</feature>
<feature type="strand" evidence="17">
    <location>
        <begin position="51"/>
        <end position="54"/>
    </location>
</feature>
<feature type="turn" evidence="17">
    <location>
        <begin position="55"/>
        <end position="57"/>
    </location>
</feature>
<feature type="strand" evidence="17">
    <location>
        <begin position="58"/>
        <end position="61"/>
    </location>
</feature>
<feature type="strand" evidence="17">
    <location>
        <begin position="63"/>
        <end position="69"/>
    </location>
</feature>
<feature type="helix" evidence="17">
    <location>
        <begin position="71"/>
        <end position="77"/>
    </location>
</feature>
<feature type="helix" evidence="17">
    <location>
        <begin position="81"/>
        <end position="83"/>
    </location>
</feature>
<feature type="helix" evidence="17">
    <location>
        <begin position="87"/>
        <end position="89"/>
    </location>
</feature>
<feature type="strand" evidence="17">
    <location>
        <begin position="90"/>
        <end position="92"/>
    </location>
</feature>
<feature type="helix" evidence="17">
    <location>
        <begin position="101"/>
        <end position="105"/>
    </location>
</feature>
<feature type="helix" evidence="17">
    <location>
        <begin position="109"/>
        <end position="124"/>
    </location>
</feature>
<feature type="strand" evidence="17">
    <location>
        <begin position="128"/>
        <end position="142"/>
    </location>
</feature>
<feature type="helix" evidence="17">
    <location>
        <begin position="143"/>
        <end position="158"/>
    </location>
</feature>
<feature type="strand" evidence="17">
    <location>
        <begin position="160"/>
        <end position="169"/>
    </location>
</feature>
<feature type="helix" evidence="17">
    <location>
        <begin position="181"/>
        <end position="195"/>
    </location>
</feature>
<feature type="strand" evidence="17">
    <location>
        <begin position="197"/>
        <end position="202"/>
    </location>
</feature>
<feature type="helix" evidence="17">
    <location>
        <begin position="204"/>
        <end position="213"/>
    </location>
</feature>
<feature type="helix" evidence="17">
    <location>
        <begin position="222"/>
        <end position="241"/>
    </location>
</feature>
<feature type="strand" evidence="17">
    <location>
        <begin position="244"/>
        <end position="246"/>
    </location>
</feature>
<feature type="helix" evidence="17">
    <location>
        <begin position="250"/>
        <end position="257"/>
    </location>
</feature>
<feature type="strand" evidence="17">
    <location>
        <begin position="265"/>
        <end position="271"/>
    </location>
</feature>
<feature type="helix" evidence="17">
    <location>
        <begin position="278"/>
        <end position="281"/>
    </location>
</feature>
<feature type="helix" evidence="17">
    <location>
        <begin position="286"/>
        <end position="294"/>
    </location>
</feature>
<feature type="helix" evidence="17">
    <location>
        <begin position="296"/>
        <end position="298"/>
    </location>
</feature>
<feature type="strand" evidence="17">
    <location>
        <begin position="300"/>
        <end position="302"/>
    </location>
</feature>
<feature type="helix" evidence="17">
    <location>
        <begin position="305"/>
        <end position="307"/>
    </location>
</feature>
<feature type="strand" evidence="17">
    <location>
        <begin position="310"/>
        <end position="320"/>
    </location>
</feature>
<feature type="helix" evidence="17">
    <location>
        <begin position="323"/>
        <end position="336"/>
    </location>
</feature>
<feature type="helix" evidence="17">
    <location>
        <begin position="338"/>
        <end position="340"/>
    </location>
</feature>
<feature type="strand" evidence="17">
    <location>
        <begin position="349"/>
        <end position="355"/>
    </location>
</feature>
<feature type="strand" evidence="17">
    <location>
        <begin position="364"/>
        <end position="371"/>
    </location>
</feature>
<feature type="helix" evidence="17">
    <location>
        <begin position="372"/>
        <end position="374"/>
    </location>
</feature>
<feature type="helix" evidence="17">
    <location>
        <begin position="375"/>
        <end position="389"/>
    </location>
</feature>
<feature type="turn" evidence="17">
    <location>
        <begin position="390"/>
        <end position="394"/>
    </location>
</feature>
<feature type="helix" evidence="17">
    <location>
        <begin position="395"/>
        <end position="399"/>
    </location>
</feature>
<feature type="turn" evidence="17">
    <location>
        <begin position="400"/>
        <end position="402"/>
    </location>
</feature>
<feature type="helix" evidence="17">
    <location>
        <begin position="406"/>
        <end position="423"/>
    </location>
</feature>
<sequence>MREIVHLQAGQCGNQIGAKFWEVISDEHGIDPTGTYHGDSDLQLERINVYYNEATGGKYVPRAVLVDLEPGTMDSVRSGPFGQIFRPDNFVFGQSGAGNNWAKGHYTEGAELVDSVLDVVRKEAESCDCLQGFQLTHSLGGGTGSGMGTLLISKIREEYPDRIMNTFSVVPSPKVSDTVVEPYNATLSVHQLVENTDETYCIDNEALYDICFRTLKLTTPTYGDLNHLVSATMSGVTTCLRFPGQLNADLRKLAVNMVPFPRLHFFMPGFAPLTSRGSQQYRALTVPELTQQMFDAKNMMAACDPRHGRYLTVAAVFRGRMSMKEVDEQMLNVQNKNSSYFVEWIPNNVKTAVCDIPPRGLKMSATFIGNSTAIQELFKRISEQFTAMFRRKAFLHWYTGEGMDEMEFTEAESNMNDLVSEYQQYQDATAEEEGEFEEEAEEEVA</sequence>
<proteinExistence type="evidence at protein level"/>
<organism>
    <name type="scientific">Homo sapiens</name>
    <name type="common">Human</name>
    <dbReference type="NCBI Taxonomy" id="9606"/>
    <lineage>
        <taxon>Eukaryota</taxon>
        <taxon>Metazoa</taxon>
        <taxon>Chordata</taxon>
        <taxon>Craniata</taxon>
        <taxon>Vertebrata</taxon>
        <taxon>Euteleostomi</taxon>
        <taxon>Mammalia</taxon>
        <taxon>Eutheria</taxon>
        <taxon>Euarchontoglires</taxon>
        <taxon>Primates</taxon>
        <taxon>Haplorrhini</taxon>
        <taxon>Catarrhini</taxon>
        <taxon>Hominidae</taxon>
        <taxon>Homo</taxon>
    </lineage>
</organism>
<protein>
    <recommendedName>
        <fullName>Tubulin beta-4B chain</fullName>
    </recommendedName>
    <alternativeName>
        <fullName>Tubulin beta-2 chain</fullName>
    </alternativeName>
    <alternativeName>
        <fullName>Tubulin beta-2C chain</fullName>
    </alternativeName>
</protein>
<reference key="1">
    <citation type="journal article" date="1985" name="J. Mol. Biol.">
        <title>Three expressed sequences within the human beta-tubulin multigene family each define a distinct isotype.</title>
        <authorList>
            <person name="Lewis S.A."/>
            <person name="Gilmartin M.E."/>
            <person name="Hall J.L."/>
            <person name="Cowan N.J."/>
        </authorList>
    </citation>
    <scope>NUCLEOTIDE SEQUENCE [GENOMIC DNA]</scope>
</reference>
<reference key="2">
    <citation type="journal article" date="2004" name="Nature">
        <title>DNA sequence and analysis of human chromosome 9.</title>
        <authorList>
            <person name="Humphray S.J."/>
            <person name="Oliver K."/>
            <person name="Hunt A.R."/>
            <person name="Plumb R.W."/>
            <person name="Loveland J.E."/>
            <person name="Howe K.L."/>
            <person name="Andrews T.D."/>
            <person name="Searle S."/>
            <person name="Hunt S.E."/>
            <person name="Scott C.E."/>
            <person name="Jones M.C."/>
            <person name="Ainscough R."/>
            <person name="Almeida J.P."/>
            <person name="Ambrose K.D."/>
            <person name="Ashwell R.I.S."/>
            <person name="Babbage A.K."/>
            <person name="Babbage S."/>
            <person name="Bagguley C.L."/>
            <person name="Bailey J."/>
            <person name="Banerjee R."/>
            <person name="Barker D.J."/>
            <person name="Barlow K.F."/>
            <person name="Bates K."/>
            <person name="Beasley H."/>
            <person name="Beasley O."/>
            <person name="Bird C.P."/>
            <person name="Bray-Allen S."/>
            <person name="Brown A.J."/>
            <person name="Brown J.Y."/>
            <person name="Burford D."/>
            <person name="Burrill W."/>
            <person name="Burton J."/>
            <person name="Carder C."/>
            <person name="Carter N.P."/>
            <person name="Chapman J.C."/>
            <person name="Chen Y."/>
            <person name="Clarke G."/>
            <person name="Clark S.Y."/>
            <person name="Clee C.M."/>
            <person name="Clegg S."/>
            <person name="Collier R.E."/>
            <person name="Corby N."/>
            <person name="Crosier M."/>
            <person name="Cummings A.T."/>
            <person name="Davies J."/>
            <person name="Dhami P."/>
            <person name="Dunn M."/>
            <person name="Dutta I."/>
            <person name="Dyer L.W."/>
            <person name="Earthrowl M.E."/>
            <person name="Faulkner L."/>
            <person name="Fleming C.J."/>
            <person name="Frankish A."/>
            <person name="Frankland J.A."/>
            <person name="French L."/>
            <person name="Fricker D.G."/>
            <person name="Garner P."/>
            <person name="Garnett J."/>
            <person name="Ghori J."/>
            <person name="Gilbert J.G.R."/>
            <person name="Glison C."/>
            <person name="Grafham D.V."/>
            <person name="Gribble S."/>
            <person name="Griffiths C."/>
            <person name="Griffiths-Jones S."/>
            <person name="Grocock R."/>
            <person name="Guy J."/>
            <person name="Hall R.E."/>
            <person name="Hammond S."/>
            <person name="Harley J.L."/>
            <person name="Harrison E.S.I."/>
            <person name="Hart E.A."/>
            <person name="Heath P.D."/>
            <person name="Henderson C.D."/>
            <person name="Hopkins B.L."/>
            <person name="Howard P.J."/>
            <person name="Howden P.J."/>
            <person name="Huckle E."/>
            <person name="Johnson C."/>
            <person name="Johnson D."/>
            <person name="Joy A.A."/>
            <person name="Kay M."/>
            <person name="Keenan S."/>
            <person name="Kershaw J.K."/>
            <person name="Kimberley A.M."/>
            <person name="King A."/>
            <person name="Knights A."/>
            <person name="Laird G.K."/>
            <person name="Langford C."/>
            <person name="Lawlor S."/>
            <person name="Leongamornlert D.A."/>
            <person name="Leversha M."/>
            <person name="Lloyd C."/>
            <person name="Lloyd D.M."/>
            <person name="Lovell J."/>
            <person name="Martin S."/>
            <person name="Mashreghi-Mohammadi M."/>
            <person name="Matthews L."/>
            <person name="McLaren S."/>
            <person name="McLay K.E."/>
            <person name="McMurray A."/>
            <person name="Milne S."/>
            <person name="Nickerson T."/>
            <person name="Nisbett J."/>
            <person name="Nordsiek G."/>
            <person name="Pearce A.V."/>
            <person name="Peck A.I."/>
            <person name="Porter K.M."/>
            <person name="Pandian R."/>
            <person name="Pelan S."/>
            <person name="Phillimore B."/>
            <person name="Povey S."/>
            <person name="Ramsey Y."/>
            <person name="Rand V."/>
            <person name="Scharfe M."/>
            <person name="Sehra H.K."/>
            <person name="Shownkeen R."/>
            <person name="Sims S.K."/>
            <person name="Skuce C.D."/>
            <person name="Smith M."/>
            <person name="Steward C.A."/>
            <person name="Swarbreck D."/>
            <person name="Sycamore N."/>
            <person name="Tester J."/>
            <person name="Thorpe A."/>
            <person name="Tracey A."/>
            <person name="Tromans A."/>
            <person name="Thomas D.W."/>
            <person name="Wall M."/>
            <person name="Wallis J.M."/>
            <person name="West A.P."/>
            <person name="Whitehead S.L."/>
            <person name="Willey D.L."/>
            <person name="Williams S.A."/>
            <person name="Wilming L."/>
            <person name="Wray P.W."/>
            <person name="Young L."/>
            <person name="Ashurst J.L."/>
            <person name="Coulson A."/>
            <person name="Blocker H."/>
            <person name="Durbin R.M."/>
            <person name="Sulston J.E."/>
            <person name="Hubbard T."/>
            <person name="Jackson M.J."/>
            <person name="Bentley D.R."/>
            <person name="Beck S."/>
            <person name="Rogers J."/>
            <person name="Dunham I."/>
        </authorList>
    </citation>
    <scope>NUCLEOTIDE SEQUENCE [LARGE SCALE GENOMIC DNA]</scope>
</reference>
<reference key="3">
    <citation type="journal article" date="2004" name="Genome Res.">
        <title>The status, quality, and expansion of the NIH full-length cDNA project: the Mammalian Gene Collection (MGC).</title>
        <authorList>
            <consortium name="The MGC Project Team"/>
        </authorList>
    </citation>
    <scope>NUCLEOTIDE SEQUENCE [LARGE SCALE MRNA]</scope>
    <source>
        <tissue>Brain</tissue>
        <tissue>Cervix</tissue>
        <tissue>Lung</tissue>
        <tissue>Lymph</tissue>
        <tissue>Muscle</tissue>
        <tissue>Skin</tissue>
        <tissue>Uterus</tissue>
    </source>
</reference>
<reference key="4">
    <citation type="journal article" date="2003" name="Nature">
        <title>Proteomic characterization of the human centrosome by protein correlation profiling.</title>
        <authorList>
            <person name="Andersen J.S."/>
            <person name="Wilkinson C.J."/>
            <person name="Mayor T."/>
            <person name="Mortensen P."/>
            <person name="Nigg E.A."/>
            <person name="Mann M."/>
        </authorList>
    </citation>
    <scope>IDENTIFICATION BY MASS SPECTROMETRY</scope>
    <source>
        <tissue>Lymphoblast</tissue>
    </source>
</reference>
<reference key="5">
    <citation type="journal article" date="2006" name="Mol. Biol. Cell">
        <title>Microtubule regulation in mitosis: tubulin phosphorylation by the cyclin-dependent kinase Cdk1.</title>
        <authorList>
            <person name="Fourest-Lieuvin A."/>
            <person name="Peris L."/>
            <person name="Gache V."/>
            <person name="Garcia-Saez I."/>
            <person name="Juillan-Binard C."/>
            <person name="Lantez V."/>
            <person name="Job D."/>
        </authorList>
    </citation>
    <scope>PHOSPHORYLATION AT SER-172</scope>
</reference>
<reference key="6">
    <citation type="journal article" date="2009" name="Cell">
        <title>Evolutionary divergence of enzymatic mechanisms for posttranslational polyglycylation.</title>
        <authorList>
            <person name="Rogowski K."/>
            <person name="Juge F."/>
            <person name="van Dijk J."/>
            <person name="Wloga D."/>
            <person name="Strub J.-M."/>
            <person name="Levilliers N."/>
            <person name="Thomas D."/>
            <person name="Bre M.-H."/>
            <person name="Van Dorsselaer A."/>
            <person name="Gaertig J."/>
            <person name="Janke C."/>
        </authorList>
    </citation>
    <scope>GLYCYLATION</scope>
</reference>
<reference key="7">
    <citation type="journal article" date="2009" name="Science">
        <title>Lysine acetylation targets protein complexes and co-regulates major cellular functions.</title>
        <authorList>
            <person name="Choudhary C."/>
            <person name="Kumar C."/>
            <person name="Gnad F."/>
            <person name="Nielsen M.L."/>
            <person name="Rehman M."/>
            <person name="Walther T.C."/>
            <person name="Olsen J.V."/>
            <person name="Mann M."/>
        </authorList>
    </citation>
    <scope>ACETYLATION [LARGE SCALE ANALYSIS] AT LYS-58</scope>
    <scope>IDENTIFICATION BY MASS SPECTROMETRY [LARGE SCALE ANALYSIS]</scope>
</reference>
<reference key="8">
    <citation type="journal article" date="2010" name="Cytoskeleton">
        <title>Tumoral and tissue-specific expression of the major human beta-tubulin isotypes.</title>
        <authorList>
            <person name="Leandro-Garcia L.J."/>
            <person name="Leskela S."/>
            <person name="Landa I."/>
            <person name="Montero-Conde C."/>
            <person name="Lopez-Jimenez E."/>
            <person name="Leton R."/>
            <person name="Cascon A."/>
            <person name="Robledo M."/>
            <person name="Rodriguez-Antona C."/>
        </authorList>
    </citation>
    <scope>TISSUE SPECIFICITY</scope>
</reference>
<reference key="9">
    <citation type="journal article" date="2011" name="BMC Syst. Biol.">
        <title>Initial characterization of the human central proteome.</title>
        <authorList>
            <person name="Burkard T.R."/>
            <person name="Planyavsky M."/>
            <person name="Kaupe I."/>
            <person name="Breitwieser F.P."/>
            <person name="Buerckstuemmer T."/>
            <person name="Bennett K.L."/>
            <person name="Superti-Furga G."/>
            <person name="Colinge J."/>
        </authorList>
    </citation>
    <scope>IDENTIFICATION BY MASS SPECTROMETRY [LARGE SCALE ANALYSIS]</scope>
</reference>
<reference key="10">
    <citation type="journal article" date="2013" name="J. Proteome Res.">
        <title>Toward a comprehensive characterization of a human cancer cell phosphoproteome.</title>
        <authorList>
            <person name="Zhou H."/>
            <person name="Di Palma S."/>
            <person name="Preisinger C."/>
            <person name="Peng M."/>
            <person name="Polat A.N."/>
            <person name="Heck A.J."/>
            <person name="Mohammed S."/>
        </authorList>
    </citation>
    <scope>PHOSPHORYLATION [LARGE SCALE ANALYSIS] AT THR-55</scope>
    <scope>IDENTIFICATION BY MASS SPECTROMETRY [LARGE SCALE ANALYSIS]</scope>
    <source>
        <tissue>Cervix carcinoma</tissue>
        <tissue>Erythroleukemia</tissue>
    </source>
</reference>
<reference key="11">
    <citation type="journal article" date="2015" name="Proteomics">
        <title>N-terminome analysis of the human mitochondrial proteome.</title>
        <authorList>
            <person name="Vaca Jacome A.S."/>
            <person name="Rabilloud T."/>
            <person name="Schaeffer-Reiss C."/>
            <person name="Rompais M."/>
            <person name="Ayoub D."/>
            <person name="Lane L."/>
            <person name="Bairoch A."/>
            <person name="Van Dorsselaer A."/>
            <person name="Carapito C."/>
        </authorList>
    </citation>
    <scope>IDENTIFICATION BY MASS SPECTROMETRY [LARGE SCALE ANALYSIS]</scope>
</reference>
<reference key="12">
    <citation type="journal article" date="2016" name="Cell">
        <title>Graded control of microtubule severing by tubulin glutamylation.</title>
        <authorList>
            <person name="Valenstein M.L."/>
            <person name="Roll-Mecak A."/>
        </authorList>
    </citation>
    <scope>GLUTAMYLATION</scope>
</reference>
<reference evidence="14" key="13">
    <citation type="journal article" date="2022" name="Proc. Natl. Acad. Sci. U.S.A.">
        <title>SPACA9 is a lumenal protein of human ciliary singlet and doublet microtubules.</title>
        <authorList>
            <person name="Gui M."/>
            <person name="Croft J.T."/>
            <person name="Zabeo D."/>
            <person name="Acharya V."/>
            <person name="Kollman J.M."/>
            <person name="Burgoyne T."/>
            <person name="Hoog J.L."/>
            <person name="Brown A."/>
        </authorList>
    </citation>
    <scope>STRUCTURE BY ELECTRON MICROSCOPY (3.60 ANGSTROMS)</scope>
</reference>
<reference key="14">
    <citation type="journal article" date="2017" name="Am. J. Hum. Genet.">
        <title>Mutations in TUBB4B cause a distinctive sensorineural disease.</title>
        <authorList>
            <person name="Luscan R."/>
            <person name="Mechaussier S."/>
            <person name="Paul A."/>
            <person name="Tian G."/>
            <person name="Gerard X."/>
            <person name="Defoort-Dellhemmes S."/>
            <person name="Loundon N."/>
            <person name="Audo I."/>
            <person name="Bonnin S."/>
            <person name="LeGargasson J.F."/>
            <person name="Dumont J."/>
            <person name="Goudin N."/>
            <person name="Garfa-Traore M."/>
            <person name="Bras M."/>
            <person name="Pouliet A."/>
            <person name="Bessieres B."/>
            <person name="Boddaert N."/>
            <person name="Sahel J.A."/>
            <person name="Lyonnet S."/>
            <person name="Kaplan J."/>
            <person name="Cowan N.J."/>
            <person name="Rozet J.M."/>
            <person name="Marlin S."/>
            <person name="Perrault I."/>
        </authorList>
    </citation>
    <scope>INVOLVEMENT IN LCAEOD</scope>
    <scope>VARIANTS LCAEOD CYS-391 AND HIS-391</scope>
    <scope>CHARACTERIZATION OF VARIANTS LCAEOD CYS-391 AND HIS-391</scope>
</reference>
<keyword id="KW-0002">3D-structure</keyword>
<keyword id="KW-0007">Acetylation</keyword>
<keyword id="KW-0966">Cell projection</keyword>
<keyword id="KW-0969">Cilium</keyword>
<keyword id="KW-0963">Cytoplasm</keyword>
<keyword id="KW-0206">Cytoskeleton</keyword>
<keyword id="KW-0209">Deafness</keyword>
<keyword id="KW-0225">Disease variant</keyword>
<keyword id="KW-0282">Flagellum</keyword>
<keyword id="KW-0342">GTP-binding</keyword>
<keyword id="KW-1017">Isopeptide bond</keyword>
<keyword id="KW-0901">Leber congenital amaurosis</keyword>
<keyword id="KW-0460">Magnesium</keyword>
<keyword id="KW-0479">Metal-binding</keyword>
<keyword id="KW-0493">Microtubule</keyword>
<keyword id="KW-0547">Nucleotide-binding</keyword>
<keyword id="KW-0597">Phosphoprotein</keyword>
<keyword id="KW-1267">Proteomics identification</keyword>
<keyword id="KW-1185">Reference proteome</keyword>